<accession>P05585</accession>
<feature type="chain" id="PRO_0000073069" description="Ovomucoid">
    <location>
        <begin position="1" status="less than"/>
        <end position="56" status="greater than"/>
    </location>
</feature>
<feature type="domain" description="Kazal-like" evidence="1">
    <location>
        <begin position="6"/>
        <end position="56"/>
    </location>
</feature>
<feature type="site" description="Reactive bond 3">
    <location>
        <begin position="18"/>
        <end position="19"/>
    </location>
</feature>
<feature type="glycosylation site" description="N-linked (GlcNAc...) asparagine">
    <location>
        <position position="45"/>
    </location>
</feature>
<feature type="disulfide bond">
    <location>
        <begin position="8"/>
        <end position="38"/>
    </location>
</feature>
<feature type="disulfide bond">
    <location>
        <begin position="16"/>
        <end position="35"/>
    </location>
</feature>
<feature type="disulfide bond">
    <location>
        <begin position="24"/>
        <end position="56"/>
    </location>
</feature>
<feature type="non-terminal residue">
    <location>
        <position position="1"/>
    </location>
</feature>
<feature type="non-terminal residue">
    <location>
        <position position="56"/>
    </location>
</feature>
<name>IOVO_BONUM</name>
<reference key="1">
    <citation type="journal article" date="1987" name="Biochemistry">
        <title>Ovomucoid third domains from 100 avian species: isolation, sequences, and hypervariability of enzyme-inhibitor contact residues.</title>
        <authorList>
            <person name="Laskowski M. Jr."/>
            <person name="Kato I."/>
            <person name="Ardelt W."/>
            <person name="Cook J."/>
            <person name="Denton A."/>
            <person name="Empie M.W."/>
            <person name="Kohr W.J."/>
            <person name="Park S.J."/>
            <person name="Parks K."/>
            <person name="Schatzley B.L."/>
            <person name="Schoenberger O.L."/>
            <person name="Tashiro M."/>
            <person name="Vichot G."/>
            <person name="Whatley H.E."/>
            <person name="Wieczorek A."/>
            <person name="Wieczorek M."/>
        </authorList>
    </citation>
    <scope>PROTEIN SEQUENCE</scope>
</reference>
<organism>
    <name type="scientific">Bonasa umbellus</name>
    <name type="common">Ruffed grouse</name>
    <name type="synonym">Tetrao umbellus</name>
    <dbReference type="NCBI Taxonomy" id="9000"/>
    <lineage>
        <taxon>Eukaryota</taxon>
        <taxon>Metazoa</taxon>
        <taxon>Chordata</taxon>
        <taxon>Craniata</taxon>
        <taxon>Vertebrata</taxon>
        <taxon>Euteleostomi</taxon>
        <taxon>Archelosauria</taxon>
        <taxon>Archosauria</taxon>
        <taxon>Dinosauria</taxon>
        <taxon>Saurischia</taxon>
        <taxon>Theropoda</taxon>
        <taxon>Coelurosauria</taxon>
        <taxon>Aves</taxon>
        <taxon>Neognathae</taxon>
        <taxon>Galloanserae</taxon>
        <taxon>Galliformes</taxon>
        <taxon>Phasianidae</taxon>
        <taxon>Tetraoninae</taxon>
        <taxon>Bonasa</taxon>
    </lineage>
</organism>
<dbReference type="SMR" id="P05585"/>
<dbReference type="GO" id="GO:0005576">
    <property type="term" value="C:extracellular region"/>
    <property type="evidence" value="ECO:0007669"/>
    <property type="project" value="UniProtKB-SubCell"/>
</dbReference>
<dbReference type="GO" id="GO:0004867">
    <property type="term" value="F:serine-type endopeptidase inhibitor activity"/>
    <property type="evidence" value="ECO:0007669"/>
    <property type="project" value="UniProtKB-KW"/>
</dbReference>
<dbReference type="CDD" id="cd00104">
    <property type="entry name" value="KAZAL_FS"/>
    <property type="match status" value="1"/>
</dbReference>
<dbReference type="FunFam" id="3.30.60.30:FF:000037">
    <property type="entry name" value="Ovomucoid"/>
    <property type="match status" value="1"/>
</dbReference>
<dbReference type="Gene3D" id="3.30.60.30">
    <property type="match status" value="1"/>
</dbReference>
<dbReference type="InterPro" id="IPR051597">
    <property type="entry name" value="Bifunctional_prot_inhibitor"/>
</dbReference>
<dbReference type="InterPro" id="IPR002350">
    <property type="entry name" value="Kazal_dom"/>
</dbReference>
<dbReference type="InterPro" id="IPR036058">
    <property type="entry name" value="Kazal_dom_sf"/>
</dbReference>
<dbReference type="InterPro" id="IPR001239">
    <property type="entry name" value="Prot_inh_Kazal-m"/>
</dbReference>
<dbReference type="PANTHER" id="PTHR47729:SF1">
    <property type="entry name" value="OVOMUCOID-LIKE-RELATED"/>
    <property type="match status" value="1"/>
</dbReference>
<dbReference type="PANTHER" id="PTHR47729">
    <property type="entry name" value="SERINE PEPTIDASE INHIBITOR, KAZAL TYPE 2, TANDEM DUPLICATE 1-RELATED"/>
    <property type="match status" value="1"/>
</dbReference>
<dbReference type="Pfam" id="PF00050">
    <property type="entry name" value="Kazal_1"/>
    <property type="match status" value="1"/>
</dbReference>
<dbReference type="PRINTS" id="PR00290">
    <property type="entry name" value="KAZALINHBTR"/>
</dbReference>
<dbReference type="SMART" id="SM00280">
    <property type="entry name" value="KAZAL"/>
    <property type="match status" value="1"/>
</dbReference>
<dbReference type="SUPFAM" id="SSF100895">
    <property type="entry name" value="Kazal-type serine protease inhibitors"/>
    <property type="match status" value="1"/>
</dbReference>
<dbReference type="PROSITE" id="PS00282">
    <property type="entry name" value="KAZAL_1"/>
    <property type="match status" value="1"/>
</dbReference>
<dbReference type="PROSITE" id="PS51465">
    <property type="entry name" value="KAZAL_2"/>
    <property type="match status" value="1"/>
</dbReference>
<comment type="subcellular location">
    <subcellularLocation>
        <location>Secreted</location>
    </subcellularLocation>
</comment>
<comment type="domain">
    <text>Avian ovomucoid consists of three homologous, tandem Kazal family inhibitory domains.</text>
</comment>
<keyword id="KW-0903">Direct protein sequencing</keyword>
<keyword id="KW-1015">Disulfide bond</keyword>
<keyword id="KW-0325">Glycoprotein</keyword>
<keyword id="KW-0646">Protease inhibitor</keyword>
<keyword id="KW-0677">Repeat</keyword>
<keyword id="KW-0964">Secreted</keyword>
<keyword id="KW-0722">Serine protease inhibitor</keyword>
<sequence length="56" mass="6025">LAAVSVDCSEYPKPACTMEYRPLCGSDNKTYGNKCNFCNAVVESNGTLNLSHFGTC</sequence>
<proteinExistence type="evidence at protein level"/>
<protein>
    <recommendedName>
        <fullName>Ovomucoid</fullName>
    </recommendedName>
</protein>
<evidence type="ECO:0000255" key="1">
    <source>
        <dbReference type="PROSITE-ProRule" id="PRU00798"/>
    </source>
</evidence>